<evidence type="ECO:0000255" key="1">
    <source>
        <dbReference type="HAMAP-Rule" id="MF_01572"/>
    </source>
</evidence>
<protein>
    <recommendedName>
        <fullName evidence="1">UPF0397 protein AYWB_013</fullName>
    </recommendedName>
</protein>
<proteinExistence type="inferred from homology"/>
<dbReference type="EMBL" id="CP000061">
    <property type="protein sequence ID" value="ABC65130.1"/>
    <property type="molecule type" value="Genomic_DNA"/>
</dbReference>
<dbReference type="RefSeq" id="WP_011412297.1">
    <property type="nucleotide sequence ID" value="NC_007716.1"/>
</dbReference>
<dbReference type="SMR" id="Q2NKB3"/>
<dbReference type="STRING" id="322098.AYWB_013"/>
<dbReference type="KEGG" id="ayw:AYWB_013"/>
<dbReference type="eggNOG" id="COG4720">
    <property type="taxonomic scope" value="Bacteria"/>
</dbReference>
<dbReference type="HOGENOM" id="CLU_120023_0_0_14"/>
<dbReference type="OrthoDB" id="4550662at2"/>
<dbReference type="PhylomeDB" id="Q2NKB3"/>
<dbReference type="Proteomes" id="UP000001934">
    <property type="component" value="Chromosome"/>
</dbReference>
<dbReference type="GO" id="GO:0005886">
    <property type="term" value="C:plasma membrane"/>
    <property type="evidence" value="ECO:0007669"/>
    <property type="project" value="UniProtKB-SubCell"/>
</dbReference>
<dbReference type="Gene3D" id="1.10.1760.20">
    <property type="match status" value="1"/>
</dbReference>
<dbReference type="HAMAP" id="MF_01572">
    <property type="entry name" value="UPF0397"/>
    <property type="match status" value="1"/>
</dbReference>
<dbReference type="InterPro" id="IPR009825">
    <property type="entry name" value="ECF_substrate-spec-like"/>
</dbReference>
<dbReference type="InterPro" id="IPR022914">
    <property type="entry name" value="UPF0397"/>
</dbReference>
<dbReference type="NCBIfam" id="NF010182">
    <property type="entry name" value="PRK13661.1"/>
    <property type="match status" value="1"/>
</dbReference>
<dbReference type="PANTHER" id="PTHR37815">
    <property type="entry name" value="UPF0397 PROTEIN BC_2624-RELATED"/>
    <property type="match status" value="1"/>
</dbReference>
<dbReference type="PANTHER" id="PTHR37815:SF3">
    <property type="entry name" value="UPF0397 PROTEIN SPR0429"/>
    <property type="match status" value="1"/>
</dbReference>
<dbReference type="Pfam" id="PF07155">
    <property type="entry name" value="ECF-ribofla_trS"/>
    <property type="match status" value="1"/>
</dbReference>
<sequence length="185" mass="20804">MSKDDSIKKTVTIGLSTTIFFVLSCFASIPVGFNVSIETSAAFLAFIAVAFGPSVGFYVGLIGHIIKDFFLFGNVSWNWVLCSALIGFIYGLPYKIIDLKYQVFTKKKIVYFWLYQVACNFIIWGFFAPQSDLLIYGQPPKLVYLQSFLIVISNILAYSVVGIKLMTIYSCHYTKQATLMKINNS</sequence>
<feature type="chain" id="PRO_0000260783" description="UPF0397 protein AYWB_013">
    <location>
        <begin position="1"/>
        <end position="185"/>
    </location>
</feature>
<feature type="transmembrane region" description="Helical" evidence="1">
    <location>
        <begin position="13"/>
        <end position="33"/>
    </location>
</feature>
<feature type="transmembrane region" description="Helical" evidence="1">
    <location>
        <begin position="42"/>
        <end position="62"/>
    </location>
</feature>
<feature type="transmembrane region" description="Helical" evidence="1">
    <location>
        <begin position="69"/>
        <end position="89"/>
    </location>
</feature>
<feature type="transmembrane region" description="Helical" evidence="1">
    <location>
        <begin position="109"/>
        <end position="129"/>
    </location>
</feature>
<feature type="transmembrane region" description="Helical" evidence="1">
    <location>
        <begin position="148"/>
        <end position="168"/>
    </location>
</feature>
<keyword id="KW-1003">Cell membrane</keyword>
<keyword id="KW-0472">Membrane</keyword>
<keyword id="KW-0812">Transmembrane</keyword>
<keyword id="KW-1133">Transmembrane helix</keyword>
<organism>
    <name type="scientific">Aster yellows witches'-broom phytoplasma (strain AYWB)</name>
    <dbReference type="NCBI Taxonomy" id="322098"/>
    <lineage>
        <taxon>Bacteria</taxon>
        <taxon>Bacillati</taxon>
        <taxon>Mycoplasmatota</taxon>
        <taxon>Mollicutes</taxon>
        <taxon>Acholeplasmatales</taxon>
        <taxon>Acholeplasmataceae</taxon>
        <taxon>Candidatus Phytoplasma</taxon>
        <taxon>16SrI (Aster yellows group)</taxon>
    </lineage>
</organism>
<comment type="subcellular location">
    <subcellularLocation>
        <location evidence="1">Cell membrane</location>
        <topology evidence="1">Multi-pass membrane protein</topology>
    </subcellularLocation>
</comment>
<comment type="similarity">
    <text evidence="1">Belongs to the UPF0397 family.</text>
</comment>
<gene>
    <name type="ordered locus">AYWB_013</name>
</gene>
<accession>Q2NKB3</accession>
<name>Y013_AYWBP</name>
<reference key="1">
    <citation type="journal article" date="2006" name="J. Bacteriol.">
        <title>Living with genome instability: the adaptation of phytoplasmas to diverse environments of their insect and plant hosts.</title>
        <authorList>
            <person name="Bai X."/>
            <person name="Zhang J."/>
            <person name="Ewing A."/>
            <person name="Miller S.A."/>
            <person name="Jancso Radek A."/>
            <person name="Shevchenko D.V."/>
            <person name="Tsukerman K."/>
            <person name="Walunas T."/>
            <person name="Lapidus A."/>
            <person name="Campbell J.W."/>
            <person name="Hogenhout S.A."/>
        </authorList>
    </citation>
    <scope>NUCLEOTIDE SEQUENCE [LARGE SCALE GENOMIC DNA]</scope>
    <source>
        <strain>AYWB</strain>
    </source>
</reference>